<organism>
    <name type="scientific">Xenopus laevis</name>
    <name type="common">African clawed frog</name>
    <dbReference type="NCBI Taxonomy" id="8355"/>
    <lineage>
        <taxon>Eukaryota</taxon>
        <taxon>Metazoa</taxon>
        <taxon>Chordata</taxon>
        <taxon>Craniata</taxon>
        <taxon>Vertebrata</taxon>
        <taxon>Euteleostomi</taxon>
        <taxon>Amphibia</taxon>
        <taxon>Batrachia</taxon>
        <taxon>Anura</taxon>
        <taxon>Pipoidea</taxon>
        <taxon>Pipidae</taxon>
        <taxon>Xenopodinae</taxon>
        <taxon>Xenopus</taxon>
        <taxon>Xenopus</taxon>
    </lineage>
</organism>
<sequence length="181" mass="20715">MGNMFANLFKGLFGKKEMRILMVGLDAAGKTTILYKLKLGEIVTTIPTIGFNVETVEYKNISFTVWDVGGQDKIRPLWRHYFQNTQGLIFVVDSNDRERVNEAREELMRMLAEDELRDAVLLVFANKQDLPNAMNAAEITDKLGLHSLRHRNWYIQATCATSGDGLYEGLDWLSNQLRNQK</sequence>
<evidence type="ECO:0000250" key="1">
    <source>
        <dbReference type="UniProtKB" id="P84077"/>
    </source>
</evidence>
<evidence type="ECO:0000250" key="2">
    <source>
        <dbReference type="UniProtKB" id="P84080"/>
    </source>
</evidence>
<evidence type="ECO:0000255" key="3"/>
<evidence type="ECO:0000305" key="4"/>
<name>ARF1_XENLA</name>
<accession>P51643</accession>
<proteinExistence type="evidence at transcript level"/>
<comment type="function">
    <text evidence="1">Small GTPase involved in protein trafficking between different compartments (By similarity). Modulates vesicle budding and uncoating within the Golgi complex (By similarity). In its GTP-bound form, triggers the recruitment of coatomer proteins to the Golgi membrane (By similarity). The hydrolysis of ARF1-bound GTP, which is mediated by ARFGAPs proteins, is required for dissociation of coat proteins from Golgi membranes and vesicles (By similarity).</text>
</comment>
<comment type="catalytic activity">
    <reaction evidence="1">
        <text>GTP + H2O = GDP + phosphate + H(+)</text>
        <dbReference type="Rhea" id="RHEA:19669"/>
        <dbReference type="ChEBI" id="CHEBI:15377"/>
        <dbReference type="ChEBI" id="CHEBI:15378"/>
        <dbReference type="ChEBI" id="CHEBI:37565"/>
        <dbReference type="ChEBI" id="CHEBI:43474"/>
        <dbReference type="ChEBI" id="CHEBI:58189"/>
        <dbReference type="EC" id="3.6.5.2"/>
    </reaction>
</comment>
<comment type="activity regulation">
    <text evidence="1">Alternates between an inactive GDP-bound form and an active GTP-bound form (By similarity). Activated by a guanine nucleotide-exchange factor (GEF) and inactivated by GTPase-activating protein (GAP) (By similarity).</text>
</comment>
<comment type="subcellular location">
    <subcellularLocation>
        <location evidence="1">Golgi apparatus membrane</location>
        <topology evidence="1">Lipid-anchor</topology>
        <orientation evidence="4">Cytoplasmic side</orientation>
    </subcellularLocation>
    <text evidence="2">In the GDP-bound form, associates transiently with the membranes via its myristoylated N-terminus where guanine nucleotide-exchange factor (GEF)-mediated nucleotide exchange occurs (By similarity). Following nucleotide exchange, the GTP-bound form undergoes a conformational change, leading to the exposure of a myristoylated N-terminal amphipathic helix that provides stable membrane anchorage (By similarity).</text>
</comment>
<comment type="similarity">
    <text evidence="4">Belongs to the small GTPase superfamily. Arf family.</text>
</comment>
<gene>
    <name type="primary">arf1</name>
</gene>
<feature type="initiator methionine" description="Removed" evidence="3">
    <location>
        <position position="1"/>
    </location>
</feature>
<feature type="chain" id="PRO_0000207382" description="ADP-ribosylation factor 1">
    <location>
        <begin position="2"/>
        <end position="181"/>
    </location>
</feature>
<feature type="region of interest" description="Important for the stable binding to the membranes" evidence="2">
    <location>
        <begin position="3"/>
        <end position="16"/>
    </location>
</feature>
<feature type="binding site" evidence="1">
    <location>
        <begin position="24"/>
        <end position="32"/>
    </location>
    <ligand>
        <name>GTP</name>
        <dbReference type="ChEBI" id="CHEBI:37565"/>
    </ligand>
</feature>
<feature type="binding site" evidence="1">
    <location>
        <begin position="126"/>
        <end position="129"/>
    </location>
    <ligand>
        <name>GTP</name>
        <dbReference type="ChEBI" id="CHEBI:37565"/>
    </ligand>
</feature>
<feature type="binding site" evidence="1">
    <location>
        <position position="160"/>
    </location>
    <ligand>
        <name>GTP</name>
        <dbReference type="ChEBI" id="CHEBI:37565"/>
    </ligand>
</feature>
<feature type="lipid moiety-binding region" description="N-myristoyl glycine" evidence="1">
    <location>
        <position position="2"/>
    </location>
</feature>
<keyword id="KW-0931">ER-Golgi transport</keyword>
<keyword id="KW-0333">Golgi apparatus</keyword>
<keyword id="KW-0342">GTP-binding</keyword>
<keyword id="KW-0378">Hydrolase</keyword>
<keyword id="KW-0449">Lipoprotein</keyword>
<keyword id="KW-0472">Membrane</keyword>
<keyword id="KW-0519">Myristate</keyword>
<keyword id="KW-0547">Nucleotide-binding</keyword>
<keyword id="KW-0653">Protein transport</keyword>
<keyword id="KW-1185">Reference proteome</keyword>
<keyword id="KW-0813">Transport</keyword>
<reference key="1">
    <citation type="journal article" date="1996" name="Biochemistry">
        <title>Purification and mass spectrometric analysis of ADP-ribosylation factor proteins from Xenopus egg cytosol.</title>
        <authorList>
            <person name="Boman A.L."/>
            <person name="Taylor T.C."/>
            <person name="Berger S.J."/>
            <person name="Melancon P."/>
            <person name="Wilson K.L."/>
        </authorList>
    </citation>
    <scope>NUCLEOTIDE SEQUENCE [MRNA]</scope>
</reference>
<reference key="2">
    <citation type="submission" date="2003-01" db="EMBL/GenBank/DDBJ databases">
        <authorList>
            <consortium name="NIH - Xenopus Gene Collection (XGC) project"/>
        </authorList>
    </citation>
    <scope>NUCLEOTIDE SEQUENCE [LARGE SCALE MRNA]</scope>
    <source>
        <tissue>Embryo</tissue>
    </source>
</reference>
<protein>
    <recommendedName>
        <fullName>ADP-ribosylation factor 1</fullName>
        <ecNumber evidence="1">3.6.5.2</ecNumber>
    </recommendedName>
</protein>
<dbReference type="EC" id="3.6.5.2" evidence="1"/>
<dbReference type="EMBL" id="U31350">
    <property type="protein sequence ID" value="AAA74582.1"/>
    <property type="molecule type" value="mRNA"/>
</dbReference>
<dbReference type="EMBL" id="BC044960">
    <property type="protein sequence ID" value="AAH44960.1"/>
    <property type="molecule type" value="mRNA"/>
</dbReference>
<dbReference type="RefSeq" id="NP_001080474.1">
    <property type="nucleotide sequence ID" value="NM_001087005.1"/>
</dbReference>
<dbReference type="BMRB" id="P51643"/>
<dbReference type="SMR" id="P51643"/>
<dbReference type="BioGRID" id="98408">
    <property type="interactions" value="1"/>
</dbReference>
<dbReference type="DNASU" id="380166"/>
<dbReference type="GeneID" id="380166"/>
<dbReference type="KEGG" id="xla:380166"/>
<dbReference type="AGR" id="Xenbase:XB-GENE-968857"/>
<dbReference type="CTD" id="380166"/>
<dbReference type="Xenbase" id="XB-GENE-968857">
    <property type="gene designation" value="arf5.L"/>
</dbReference>
<dbReference type="OrthoDB" id="2011769at2759"/>
<dbReference type="Proteomes" id="UP000186698">
    <property type="component" value="Chromosome 6L"/>
</dbReference>
<dbReference type="Bgee" id="380166">
    <property type="expression patterns" value="Expressed in brain and 19 other cell types or tissues"/>
</dbReference>
<dbReference type="GO" id="GO:0005737">
    <property type="term" value="C:cytoplasm"/>
    <property type="evidence" value="ECO:0000318"/>
    <property type="project" value="GO_Central"/>
</dbReference>
<dbReference type="GO" id="GO:0000139">
    <property type="term" value="C:Golgi membrane"/>
    <property type="evidence" value="ECO:0007669"/>
    <property type="project" value="UniProtKB-SubCell"/>
</dbReference>
<dbReference type="GO" id="GO:0005886">
    <property type="term" value="C:plasma membrane"/>
    <property type="evidence" value="ECO:0000318"/>
    <property type="project" value="GO_Central"/>
</dbReference>
<dbReference type="GO" id="GO:0005525">
    <property type="term" value="F:GTP binding"/>
    <property type="evidence" value="ECO:0000318"/>
    <property type="project" value="GO_Central"/>
</dbReference>
<dbReference type="GO" id="GO:0003924">
    <property type="term" value="F:GTPase activity"/>
    <property type="evidence" value="ECO:0007669"/>
    <property type="project" value="InterPro"/>
</dbReference>
<dbReference type="GO" id="GO:0006886">
    <property type="term" value="P:intracellular protein transport"/>
    <property type="evidence" value="ECO:0000318"/>
    <property type="project" value="GO_Central"/>
</dbReference>
<dbReference type="GO" id="GO:0016192">
    <property type="term" value="P:vesicle-mediated transport"/>
    <property type="evidence" value="ECO:0000318"/>
    <property type="project" value="GO_Central"/>
</dbReference>
<dbReference type="CDD" id="cd04150">
    <property type="entry name" value="Arf1_5_like"/>
    <property type="match status" value="1"/>
</dbReference>
<dbReference type="FunFam" id="3.40.50.300:FF:003500">
    <property type="entry name" value="ADP-ribosylation factor 1"/>
    <property type="match status" value="1"/>
</dbReference>
<dbReference type="Gene3D" id="3.40.50.300">
    <property type="entry name" value="P-loop containing nucleotide triphosphate hydrolases"/>
    <property type="match status" value="1"/>
</dbReference>
<dbReference type="InterPro" id="IPR045872">
    <property type="entry name" value="Arf1-5-like"/>
</dbReference>
<dbReference type="InterPro" id="IPR027417">
    <property type="entry name" value="P-loop_NTPase"/>
</dbReference>
<dbReference type="InterPro" id="IPR005225">
    <property type="entry name" value="Small_GTP-bd"/>
</dbReference>
<dbReference type="InterPro" id="IPR024156">
    <property type="entry name" value="Small_GTPase_ARF"/>
</dbReference>
<dbReference type="InterPro" id="IPR006689">
    <property type="entry name" value="Small_GTPase_ARF/SAR"/>
</dbReference>
<dbReference type="NCBIfam" id="TIGR00231">
    <property type="entry name" value="small_GTP"/>
    <property type="match status" value="1"/>
</dbReference>
<dbReference type="PANTHER" id="PTHR11711">
    <property type="entry name" value="ADP RIBOSYLATION FACTOR-RELATED"/>
    <property type="match status" value="1"/>
</dbReference>
<dbReference type="Pfam" id="PF00025">
    <property type="entry name" value="Arf"/>
    <property type="match status" value="1"/>
</dbReference>
<dbReference type="PRINTS" id="PR00328">
    <property type="entry name" value="SAR1GTPBP"/>
</dbReference>
<dbReference type="SMART" id="SM00177">
    <property type="entry name" value="ARF"/>
    <property type="match status" value="1"/>
</dbReference>
<dbReference type="SMART" id="SM00175">
    <property type="entry name" value="RAB"/>
    <property type="match status" value="1"/>
</dbReference>
<dbReference type="SMART" id="SM00178">
    <property type="entry name" value="SAR"/>
    <property type="match status" value="1"/>
</dbReference>
<dbReference type="SUPFAM" id="SSF52540">
    <property type="entry name" value="P-loop containing nucleoside triphosphate hydrolases"/>
    <property type="match status" value="1"/>
</dbReference>
<dbReference type="PROSITE" id="PS51417">
    <property type="entry name" value="ARF"/>
    <property type="match status" value="1"/>
</dbReference>